<reference key="1">
    <citation type="journal article" date="2002" name="Nat. Biotechnol.">
        <title>Genome sequence of the dissimilatory metal ion-reducing bacterium Shewanella oneidensis.</title>
        <authorList>
            <person name="Heidelberg J.F."/>
            <person name="Paulsen I.T."/>
            <person name="Nelson K.E."/>
            <person name="Gaidos E.J."/>
            <person name="Nelson W.C."/>
            <person name="Read T.D."/>
            <person name="Eisen J.A."/>
            <person name="Seshadri R."/>
            <person name="Ward N.L."/>
            <person name="Methe B.A."/>
            <person name="Clayton R.A."/>
            <person name="Meyer T."/>
            <person name="Tsapin A."/>
            <person name="Scott J."/>
            <person name="Beanan M.J."/>
            <person name="Brinkac L.M."/>
            <person name="Daugherty S.C."/>
            <person name="DeBoy R.T."/>
            <person name="Dodson R.J."/>
            <person name="Durkin A.S."/>
            <person name="Haft D.H."/>
            <person name="Kolonay J.F."/>
            <person name="Madupu R."/>
            <person name="Peterson J.D."/>
            <person name="Umayam L.A."/>
            <person name="White O."/>
            <person name="Wolf A.M."/>
            <person name="Vamathevan J.J."/>
            <person name="Weidman J.F."/>
            <person name="Impraim M."/>
            <person name="Lee K."/>
            <person name="Berry K.J."/>
            <person name="Lee C."/>
            <person name="Mueller J."/>
            <person name="Khouri H.M."/>
            <person name="Gill J."/>
            <person name="Utterback T.R."/>
            <person name="McDonald L.A."/>
            <person name="Feldblyum T.V."/>
            <person name="Smith H.O."/>
            <person name="Venter J.C."/>
            <person name="Nealson K.H."/>
            <person name="Fraser C.M."/>
        </authorList>
    </citation>
    <scope>NUCLEOTIDE SEQUENCE [LARGE SCALE GENOMIC DNA]</scope>
    <source>
        <strain>ATCC 700550 / JCM 31522 / CIP 106686 / LMG 19005 / NCIMB 14063 / MR-1</strain>
    </source>
</reference>
<sequence>MPLSEAAVKVQAALQERGLETPMLPSVFTPEERKDKIEHHMKEILTLMSLDLSDDSLADTPRRIAKMYVDEIFSGLDYANFPKITVIDNKMGFDEMVRVQDISLTSTCEHHLVTIDGTATIAYLPRKKIIGLSKINRIVRFFAQRPQVQERLTQQVLVALQTLLETKDVAVKMDAVHYCVKSRGVMDSTSSTTTTALGGIFKSNPATRAEFLHQSK</sequence>
<accession>Q8E9L6</accession>
<protein>
    <recommendedName>
        <fullName evidence="2">GTP cyclohydrolase 1</fullName>
        <ecNumber evidence="2">3.5.4.16</ecNumber>
    </recommendedName>
    <alternativeName>
        <fullName evidence="2">GTP cyclohydrolase I</fullName>
        <shortName evidence="2">GTP-CH-I</shortName>
    </alternativeName>
</protein>
<name>GCH1_SHEON</name>
<evidence type="ECO:0000250" key="1"/>
<evidence type="ECO:0000255" key="2">
    <source>
        <dbReference type="HAMAP-Rule" id="MF_00223"/>
    </source>
</evidence>
<proteinExistence type="inferred from homology"/>
<organism>
    <name type="scientific">Shewanella oneidensis (strain ATCC 700550 / JCM 31522 / CIP 106686 / LMG 19005 / NCIMB 14063 / MR-1)</name>
    <dbReference type="NCBI Taxonomy" id="211586"/>
    <lineage>
        <taxon>Bacteria</taxon>
        <taxon>Pseudomonadati</taxon>
        <taxon>Pseudomonadota</taxon>
        <taxon>Gammaproteobacteria</taxon>
        <taxon>Alteromonadales</taxon>
        <taxon>Shewanellaceae</taxon>
        <taxon>Shewanella</taxon>
    </lineage>
</organism>
<keyword id="KW-0342">GTP-binding</keyword>
<keyword id="KW-0378">Hydrolase</keyword>
<keyword id="KW-0479">Metal-binding</keyword>
<keyword id="KW-0547">Nucleotide-binding</keyword>
<keyword id="KW-0554">One-carbon metabolism</keyword>
<keyword id="KW-1185">Reference proteome</keyword>
<keyword id="KW-0862">Zinc</keyword>
<feature type="chain" id="PRO_0000119442" description="GTP cyclohydrolase 1">
    <location>
        <begin position="1"/>
        <end position="216"/>
    </location>
</feature>
<feature type="binding site" evidence="2">
    <location>
        <position position="108"/>
    </location>
    <ligand>
        <name>Zn(2+)</name>
        <dbReference type="ChEBI" id="CHEBI:29105"/>
    </ligand>
</feature>
<feature type="binding site" evidence="2">
    <location>
        <position position="111"/>
    </location>
    <ligand>
        <name>Zn(2+)</name>
        <dbReference type="ChEBI" id="CHEBI:29105"/>
    </ligand>
</feature>
<feature type="binding site" evidence="2">
    <location>
        <position position="179"/>
    </location>
    <ligand>
        <name>Zn(2+)</name>
        <dbReference type="ChEBI" id="CHEBI:29105"/>
    </ligand>
</feature>
<gene>
    <name evidence="2" type="primary">folE</name>
    <name type="ordered locus">SO_4254</name>
</gene>
<comment type="catalytic activity">
    <reaction evidence="2">
        <text>GTP + H2O = 7,8-dihydroneopterin 3'-triphosphate + formate + H(+)</text>
        <dbReference type="Rhea" id="RHEA:17473"/>
        <dbReference type="ChEBI" id="CHEBI:15377"/>
        <dbReference type="ChEBI" id="CHEBI:15378"/>
        <dbReference type="ChEBI" id="CHEBI:15740"/>
        <dbReference type="ChEBI" id="CHEBI:37565"/>
        <dbReference type="ChEBI" id="CHEBI:58462"/>
        <dbReference type="EC" id="3.5.4.16"/>
    </reaction>
</comment>
<comment type="pathway">
    <text evidence="2">Cofactor biosynthesis; 7,8-dihydroneopterin triphosphate biosynthesis; 7,8-dihydroneopterin triphosphate from GTP: step 1/1.</text>
</comment>
<comment type="subunit">
    <text evidence="1">Toroid-shaped homodecamer, composed of two pentamers of five dimers.</text>
</comment>
<comment type="similarity">
    <text evidence="2">Belongs to the GTP cyclohydrolase I family.</text>
</comment>
<dbReference type="EC" id="3.5.4.16" evidence="2"/>
<dbReference type="EMBL" id="AE014299">
    <property type="protein sequence ID" value="AAN57225.1"/>
    <property type="molecule type" value="Genomic_DNA"/>
</dbReference>
<dbReference type="RefSeq" id="NP_719781.1">
    <property type="nucleotide sequence ID" value="NC_004347.2"/>
</dbReference>
<dbReference type="RefSeq" id="WP_011073928.1">
    <property type="nucleotide sequence ID" value="NZ_CP053946.1"/>
</dbReference>
<dbReference type="SMR" id="Q8E9L6"/>
<dbReference type="STRING" id="211586.SO_4254"/>
<dbReference type="PaxDb" id="211586-SO_4254"/>
<dbReference type="KEGG" id="son:SO_4254"/>
<dbReference type="PATRIC" id="fig|211586.12.peg.4113"/>
<dbReference type="eggNOG" id="COG0302">
    <property type="taxonomic scope" value="Bacteria"/>
</dbReference>
<dbReference type="HOGENOM" id="CLU_049768_3_2_6"/>
<dbReference type="OrthoDB" id="9801207at2"/>
<dbReference type="PhylomeDB" id="Q8E9L6"/>
<dbReference type="BioCyc" id="SONE211586:G1GMP-3929-MONOMER"/>
<dbReference type="UniPathway" id="UPA00848">
    <property type="reaction ID" value="UER00151"/>
</dbReference>
<dbReference type="Proteomes" id="UP000008186">
    <property type="component" value="Chromosome"/>
</dbReference>
<dbReference type="GO" id="GO:0005737">
    <property type="term" value="C:cytoplasm"/>
    <property type="evidence" value="ECO:0000318"/>
    <property type="project" value="GO_Central"/>
</dbReference>
<dbReference type="GO" id="GO:0005525">
    <property type="term" value="F:GTP binding"/>
    <property type="evidence" value="ECO:0000318"/>
    <property type="project" value="GO_Central"/>
</dbReference>
<dbReference type="GO" id="GO:0003934">
    <property type="term" value="F:GTP cyclohydrolase I activity"/>
    <property type="evidence" value="ECO:0000318"/>
    <property type="project" value="GO_Central"/>
</dbReference>
<dbReference type="GO" id="GO:0008270">
    <property type="term" value="F:zinc ion binding"/>
    <property type="evidence" value="ECO:0000318"/>
    <property type="project" value="GO_Central"/>
</dbReference>
<dbReference type="GO" id="GO:0006730">
    <property type="term" value="P:one-carbon metabolic process"/>
    <property type="evidence" value="ECO:0007669"/>
    <property type="project" value="UniProtKB-UniRule"/>
</dbReference>
<dbReference type="GO" id="GO:0006729">
    <property type="term" value="P:tetrahydrobiopterin biosynthetic process"/>
    <property type="evidence" value="ECO:0000318"/>
    <property type="project" value="GO_Central"/>
</dbReference>
<dbReference type="GO" id="GO:0046654">
    <property type="term" value="P:tetrahydrofolate biosynthetic process"/>
    <property type="evidence" value="ECO:0007669"/>
    <property type="project" value="UniProtKB-UniRule"/>
</dbReference>
<dbReference type="FunFam" id="1.10.286.10:FF:000002">
    <property type="entry name" value="GTP cyclohydrolase 1"/>
    <property type="match status" value="1"/>
</dbReference>
<dbReference type="FunFam" id="3.30.1130.10:FF:000001">
    <property type="entry name" value="GTP cyclohydrolase 1"/>
    <property type="match status" value="1"/>
</dbReference>
<dbReference type="Gene3D" id="1.10.286.10">
    <property type="match status" value="1"/>
</dbReference>
<dbReference type="Gene3D" id="3.30.1130.10">
    <property type="match status" value="1"/>
</dbReference>
<dbReference type="HAMAP" id="MF_00223">
    <property type="entry name" value="FolE"/>
    <property type="match status" value="1"/>
</dbReference>
<dbReference type="InterPro" id="IPR043133">
    <property type="entry name" value="GTP-CH-I_C/QueF"/>
</dbReference>
<dbReference type="InterPro" id="IPR043134">
    <property type="entry name" value="GTP-CH-I_N"/>
</dbReference>
<dbReference type="InterPro" id="IPR001474">
    <property type="entry name" value="GTP_CycHdrlase_I"/>
</dbReference>
<dbReference type="InterPro" id="IPR018234">
    <property type="entry name" value="GTP_CycHdrlase_I_CS"/>
</dbReference>
<dbReference type="InterPro" id="IPR020602">
    <property type="entry name" value="GTP_CycHdrlase_I_dom"/>
</dbReference>
<dbReference type="NCBIfam" id="TIGR00063">
    <property type="entry name" value="folE"/>
    <property type="match status" value="1"/>
</dbReference>
<dbReference type="NCBIfam" id="NF006824">
    <property type="entry name" value="PRK09347.1-1"/>
    <property type="match status" value="1"/>
</dbReference>
<dbReference type="NCBIfam" id="NF006826">
    <property type="entry name" value="PRK09347.1-3"/>
    <property type="match status" value="1"/>
</dbReference>
<dbReference type="PANTHER" id="PTHR11109:SF7">
    <property type="entry name" value="GTP CYCLOHYDROLASE 1"/>
    <property type="match status" value="1"/>
</dbReference>
<dbReference type="PANTHER" id="PTHR11109">
    <property type="entry name" value="GTP CYCLOHYDROLASE I"/>
    <property type="match status" value="1"/>
</dbReference>
<dbReference type="Pfam" id="PF01227">
    <property type="entry name" value="GTP_cyclohydroI"/>
    <property type="match status" value="1"/>
</dbReference>
<dbReference type="SUPFAM" id="SSF55620">
    <property type="entry name" value="Tetrahydrobiopterin biosynthesis enzymes-like"/>
    <property type="match status" value="1"/>
</dbReference>
<dbReference type="PROSITE" id="PS00859">
    <property type="entry name" value="GTP_CYCLOHYDROL_1_1"/>
    <property type="match status" value="1"/>
</dbReference>
<dbReference type="PROSITE" id="PS00860">
    <property type="entry name" value="GTP_CYCLOHYDROL_1_2"/>
    <property type="match status" value="1"/>
</dbReference>